<proteinExistence type="evidence at protein level"/>
<organism>
    <name type="scientific">Staphylococcus epidermidis (strain ATCC 35984 / DSM 28319 / BCRC 17069 / CCUG 31568 / BM 3577 / RP62A)</name>
    <dbReference type="NCBI Taxonomy" id="176279"/>
    <lineage>
        <taxon>Bacteria</taxon>
        <taxon>Bacillati</taxon>
        <taxon>Bacillota</taxon>
        <taxon>Bacilli</taxon>
        <taxon>Bacillales</taxon>
        <taxon>Staphylococcaceae</taxon>
        <taxon>Staphylococcus</taxon>
    </lineage>
</organism>
<keyword id="KW-0002">3D-structure</keyword>
<keyword id="KW-0028">Amino-acid biosynthesis</keyword>
<keyword id="KW-0057">Aromatic amino acid biosynthesis</keyword>
<keyword id="KW-0521">NADP</keyword>
<keyword id="KW-0560">Oxidoreductase</keyword>
<keyword id="KW-1185">Reference proteome</keyword>
<evidence type="ECO:0000255" key="1">
    <source>
        <dbReference type="HAMAP-Rule" id="MF_00222"/>
    </source>
</evidence>
<evidence type="ECO:0000269" key="2">
    <source>
    </source>
</evidence>
<evidence type="ECO:0000303" key="3">
    <source>
    </source>
</evidence>
<evidence type="ECO:0007829" key="4">
    <source>
        <dbReference type="PDB" id="3DON"/>
    </source>
</evidence>
<feature type="chain" id="PRO_0000136037" description="Shikimate dehydrogenase (NADP(+))">
    <location>
        <begin position="1"/>
        <end position="269"/>
    </location>
</feature>
<feature type="active site" description="Proton acceptor" evidence="1">
    <location>
        <position position="64"/>
    </location>
</feature>
<feature type="binding site" evidence="1 2">
    <location>
        <begin position="13"/>
        <end position="15"/>
    </location>
    <ligand>
        <name>shikimate</name>
        <dbReference type="ChEBI" id="CHEBI:36208"/>
    </ligand>
</feature>
<feature type="binding site" evidence="1 2">
    <location>
        <position position="60"/>
    </location>
    <ligand>
        <name>shikimate</name>
        <dbReference type="ChEBI" id="CHEBI:36208"/>
    </ligand>
</feature>
<feature type="binding site" evidence="1">
    <location>
        <position position="76"/>
    </location>
    <ligand>
        <name>NADP(+)</name>
        <dbReference type="ChEBI" id="CHEBI:58349"/>
    </ligand>
</feature>
<feature type="binding site" evidence="1 2">
    <location>
        <position position="85"/>
    </location>
    <ligand>
        <name>shikimate</name>
        <dbReference type="ChEBI" id="CHEBI:36208"/>
    </ligand>
</feature>
<feature type="binding site" evidence="1 2">
    <location>
        <position position="100"/>
    </location>
    <ligand>
        <name>shikimate</name>
        <dbReference type="ChEBI" id="CHEBI:36208"/>
    </ligand>
</feature>
<feature type="binding site" evidence="1">
    <location>
        <begin position="124"/>
        <end position="128"/>
    </location>
    <ligand>
        <name>NADP(+)</name>
        <dbReference type="ChEBI" id="CHEBI:58349"/>
    </ligand>
</feature>
<feature type="binding site" evidence="1">
    <location>
        <begin position="148"/>
        <end position="153"/>
    </location>
    <ligand>
        <name>NADP(+)</name>
        <dbReference type="ChEBI" id="CHEBI:58349"/>
    </ligand>
</feature>
<feature type="binding site" evidence="1">
    <location>
        <position position="209"/>
    </location>
    <ligand>
        <name>NADP(+)</name>
        <dbReference type="ChEBI" id="CHEBI:58349"/>
    </ligand>
</feature>
<feature type="binding site" evidence="1">
    <location>
        <position position="211"/>
    </location>
    <ligand>
        <name>shikimate</name>
        <dbReference type="ChEBI" id="CHEBI:36208"/>
    </ligand>
</feature>
<feature type="binding site" evidence="1">
    <location>
        <position position="232"/>
    </location>
    <ligand>
        <name>NADP(+)</name>
        <dbReference type="ChEBI" id="CHEBI:58349"/>
    </ligand>
</feature>
<feature type="binding site" evidence="1 2">
    <location>
        <position position="239"/>
    </location>
    <ligand>
        <name>shikimate</name>
        <dbReference type="ChEBI" id="CHEBI:36208"/>
    </ligand>
</feature>
<feature type="site" description="Plays a major role in the catalytic process and a minor role in the substrate binding" evidence="2">
    <location>
        <position position="211"/>
    </location>
</feature>
<feature type="mutagenesis site" description="Leads to a 345-fold decrease in the catalytic efficiency and a 3-fold decrease in the affinity binding for shikimate." evidence="2">
    <original>Y</original>
    <variation>F</variation>
    <location>
        <position position="211"/>
    </location>
</feature>
<feature type="strand" evidence="4">
    <location>
        <begin position="2"/>
        <end position="9"/>
    </location>
</feature>
<feature type="helix" evidence="4">
    <location>
        <begin position="15"/>
        <end position="25"/>
    </location>
</feature>
<feature type="strand" evidence="4">
    <location>
        <begin position="31"/>
        <end position="36"/>
    </location>
</feature>
<feature type="helix" evidence="4">
    <location>
        <begin position="39"/>
        <end position="44"/>
    </location>
</feature>
<feature type="helix" evidence="4">
    <location>
        <begin position="45"/>
        <end position="51"/>
    </location>
</feature>
<feature type="strand" evidence="4">
    <location>
        <begin position="55"/>
        <end position="59"/>
    </location>
</feature>
<feature type="turn" evidence="4">
    <location>
        <begin position="64"/>
        <end position="67"/>
    </location>
</feature>
<feature type="helix" evidence="4">
    <location>
        <begin position="68"/>
        <end position="70"/>
    </location>
</feature>
<feature type="strand" evidence="4">
    <location>
        <begin position="72"/>
        <end position="74"/>
    </location>
</feature>
<feature type="helix" evidence="4">
    <location>
        <begin position="76"/>
        <end position="81"/>
    </location>
</feature>
<feature type="strand" evidence="4">
    <location>
        <begin position="86"/>
        <end position="90"/>
    </location>
</feature>
<feature type="strand" evidence="4">
    <location>
        <begin position="93"/>
        <end position="97"/>
    </location>
</feature>
<feature type="helix" evidence="4">
    <location>
        <begin position="100"/>
        <end position="111"/>
    </location>
</feature>
<feature type="helix" evidence="4">
    <location>
        <begin position="115"/>
        <end position="117"/>
    </location>
</feature>
<feature type="strand" evidence="4">
    <location>
        <begin position="120"/>
        <end position="123"/>
    </location>
</feature>
<feature type="helix" evidence="4">
    <location>
        <begin position="127"/>
        <end position="137"/>
    </location>
</feature>
<feature type="strand" evidence="4">
    <location>
        <begin position="145"/>
        <end position="147"/>
    </location>
</feature>
<feature type="helix" evidence="4">
    <location>
        <begin position="151"/>
        <end position="154"/>
    </location>
</feature>
<feature type="strand" evidence="4">
    <location>
        <begin position="162"/>
        <end position="164"/>
    </location>
</feature>
<feature type="helix" evidence="4">
    <location>
        <begin position="166"/>
        <end position="171"/>
    </location>
</feature>
<feature type="helix" evidence="4">
    <location>
        <begin position="173"/>
        <end position="175"/>
    </location>
</feature>
<feature type="strand" evidence="4">
    <location>
        <begin position="177"/>
        <end position="181"/>
    </location>
</feature>
<feature type="strand" evidence="4">
    <location>
        <begin position="205"/>
        <end position="209"/>
    </location>
</feature>
<feature type="strand" evidence="4">
    <location>
        <begin position="212"/>
        <end position="215"/>
    </location>
</feature>
<feature type="helix" evidence="4">
    <location>
        <begin position="217"/>
        <end position="224"/>
    </location>
</feature>
<feature type="helix" evidence="4">
    <location>
        <begin position="233"/>
        <end position="248"/>
    </location>
</feature>
<feature type="helix" evidence="4">
    <location>
        <begin position="254"/>
        <end position="265"/>
    </location>
</feature>
<accession>Q5HNV1</accession>
<protein>
    <recommendedName>
        <fullName evidence="1 3">Shikimate dehydrogenase (NADP(+))</fullName>
        <shortName evidence="1 3">SDH</shortName>
        <ecNumber evidence="1 2">1.1.1.25</ecNumber>
    </recommendedName>
</protein>
<sequence>MKFAVIGNPISHSLSPLMHHANFQSLNLENTYEAINVPVNQFQDIKKIISEKSIDGFNVTIPHKERIIPYLDDINEQAKSVGAVNTVLVKDGKWIGYNTDGIGYVNGLKQIYEGIEDAYILILGAGGASKGIANELYKIVRPTLTVANRTMSRFNNWSLNINKINLSHAESHLDEFDIIINTTPAGMNGNTDSVISLNRLASHTLVSDIVYNPYKTPILIEAEQRGNPIYNGLDMFVHQGAESFKIWTNLEPDIKAMKNIVIQKLKGEL</sequence>
<comment type="function">
    <text evidence="1 2">Involved in the biosynthesis of the chorismate, which leads to the biosynthesis of aromatic amino acids. Catalyzes the reversible NADPH linked reduction of 3-dehydroshikimate (DHSA) to yield shikimate (SA). It can also use NAD to oxidize shikimate.</text>
</comment>
<comment type="catalytic activity">
    <reaction evidence="1 2">
        <text>shikimate + NADP(+) = 3-dehydroshikimate + NADPH + H(+)</text>
        <dbReference type="Rhea" id="RHEA:17737"/>
        <dbReference type="ChEBI" id="CHEBI:15378"/>
        <dbReference type="ChEBI" id="CHEBI:16630"/>
        <dbReference type="ChEBI" id="CHEBI:36208"/>
        <dbReference type="ChEBI" id="CHEBI:57783"/>
        <dbReference type="ChEBI" id="CHEBI:58349"/>
        <dbReference type="EC" id="1.1.1.25"/>
    </reaction>
</comment>
<comment type="biophysicochemical properties">
    <kinetics>
        <KM evidence="2">73 uM for shikimate (at pH 8 and at 25 degrees Celsius)</KM>
        <KM evidence="2">100 uM for NADP (at pH 8 and at 25 degrees Celsius)</KM>
        <KM evidence="2">10.6 mM for NAD (at pH 8 and at 25 degrees Celsius)</KM>
        <text evidence="2">kcat is 22.8 sec(-1) for dehydrogenase activity with shikimate (at pH 8 and at 25 degrees Celsius). kcat is 87 sec(-1) for dehydrogenase activity with NAD (at pH 8 and at 25 degrees Celsius).</text>
    </kinetics>
</comment>
<comment type="pathway">
    <text evidence="1">Metabolic intermediate biosynthesis; chorismate biosynthesis; chorismate from D-erythrose 4-phosphate and phosphoenolpyruvate: step 4/7.</text>
</comment>
<comment type="subunit">
    <text evidence="1 2">Monomer or homodimer.</text>
</comment>
<comment type="similarity">
    <text evidence="1">Belongs to the shikimate dehydrogenase family.</text>
</comment>
<name>AROE_STAEQ</name>
<dbReference type="EC" id="1.1.1.25" evidence="1 2"/>
<dbReference type="EMBL" id="CP000029">
    <property type="protein sequence ID" value="AAW54512.1"/>
    <property type="molecule type" value="Genomic_DNA"/>
</dbReference>
<dbReference type="RefSeq" id="WP_001831091.1">
    <property type="nucleotide sequence ID" value="NC_002976.3"/>
</dbReference>
<dbReference type="PDB" id="3DON">
    <property type="method" value="X-ray"/>
    <property type="resolution" value="2.10 A"/>
    <property type="chains" value="A=1-269"/>
</dbReference>
<dbReference type="PDB" id="3DOO">
    <property type="method" value="X-ray"/>
    <property type="resolution" value="2.20 A"/>
    <property type="chains" value="A=1-269"/>
</dbReference>
<dbReference type="PDBsum" id="3DON"/>
<dbReference type="PDBsum" id="3DOO"/>
<dbReference type="SMR" id="Q5HNV1"/>
<dbReference type="STRING" id="176279.SERP1163"/>
<dbReference type="GeneID" id="50018602"/>
<dbReference type="KEGG" id="ser:SERP1163"/>
<dbReference type="eggNOG" id="COG0169">
    <property type="taxonomic scope" value="Bacteria"/>
</dbReference>
<dbReference type="HOGENOM" id="CLU_044063_4_1_9"/>
<dbReference type="BRENDA" id="1.1.1.25">
    <property type="organism ID" value="5875"/>
</dbReference>
<dbReference type="UniPathway" id="UPA00053">
    <property type="reaction ID" value="UER00087"/>
</dbReference>
<dbReference type="EvolutionaryTrace" id="Q5HNV1"/>
<dbReference type="Proteomes" id="UP000000531">
    <property type="component" value="Chromosome"/>
</dbReference>
<dbReference type="GO" id="GO:0005829">
    <property type="term" value="C:cytosol"/>
    <property type="evidence" value="ECO:0007669"/>
    <property type="project" value="TreeGrafter"/>
</dbReference>
<dbReference type="GO" id="GO:0050661">
    <property type="term" value="F:NADP binding"/>
    <property type="evidence" value="ECO:0000314"/>
    <property type="project" value="UniProtKB"/>
</dbReference>
<dbReference type="GO" id="GO:0004764">
    <property type="term" value="F:shikimate 3-dehydrogenase (NADP+) activity"/>
    <property type="evidence" value="ECO:0000314"/>
    <property type="project" value="UniProtKB"/>
</dbReference>
<dbReference type="GO" id="GO:0008652">
    <property type="term" value="P:amino acid biosynthetic process"/>
    <property type="evidence" value="ECO:0007669"/>
    <property type="project" value="UniProtKB-KW"/>
</dbReference>
<dbReference type="GO" id="GO:0009073">
    <property type="term" value="P:aromatic amino acid family biosynthetic process"/>
    <property type="evidence" value="ECO:0007669"/>
    <property type="project" value="UniProtKB-KW"/>
</dbReference>
<dbReference type="GO" id="GO:0009423">
    <property type="term" value="P:chorismate biosynthetic process"/>
    <property type="evidence" value="ECO:0000314"/>
    <property type="project" value="UniProtKB"/>
</dbReference>
<dbReference type="GO" id="GO:0019632">
    <property type="term" value="P:shikimate metabolic process"/>
    <property type="evidence" value="ECO:0000314"/>
    <property type="project" value="UniProtKB"/>
</dbReference>
<dbReference type="CDD" id="cd01065">
    <property type="entry name" value="NAD_bind_Shikimate_DH"/>
    <property type="match status" value="1"/>
</dbReference>
<dbReference type="FunFam" id="3.40.50.10860:FF:000016">
    <property type="entry name" value="Shikimate dehydrogenase (NADP(+))"/>
    <property type="match status" value="1"/>
</dbReference>
<dbReference type="Gene3D" id="3.40.50.10860">
    <property type="entry name" value="Leucine Dehydrogenase, chain A, domain 1"/>
    <property type="match status" value="1"/>
</dbReference>
<dbReference type="Gene3D" id="3.40.50.720">
    <property type="entry name" value="NAD(P)-binding Rossmann-like Domain"/>
    <property type="match status" value="1"/>
</dbReference>
<dbReference type="HAMAP" id="MF_00222">
    <property type="entry name" value="Shikimate_DH_AroE"/>
    <property type="match status" value="1"/>
</dbReference>
<dbReference type="InterPro" id="IPR046346">
    <property type="entry name" value="Aminoacid_DH-like_N_sf"/>
</dbReference>
<dbReference type="InterPro" id="IPR036291">
    <property type="entry name" value="NAD(P)-bd_dom_sf"/>
</dbReference>
<dbReference type="InterPro" id="IPR041121">
    <property type="entry name" value="SDH_C"/>
</dbReference>
<dbReference type="InterPro" id="IPR011342">
    <property type="entry name" value="Shikimate_DH"/>
</dbReference>
<dbReference type="InterPro" id="IPR013708">
    <property type="entry name" value="Shikimate_DH-bd_N"/>
</dbReference>
<dbReference type="InterPro" id="IPR022893">
    <property type="entry name" value="Shikimate_DH_fam"/>
</dbReference>
<dbReference type="InterPro" id="IPR006151">
    <property type="entry name" value="Shikm_DH/Glu-tRNA_Rdtase"/>
</dbReference>
<dbReference type="NCBIfam" id="TIGR00507">
    <property type="entry name" value="aroE"/>
    <property type="match status" value="1"/>
</dbReference>
<dbReference type="PANTHER" id="PTHR21089:SF1">
    <property type="entry name" value="BIFUNCTIONAL 3-DEHYDROQUINATE DEHYDRATASE_SHIKIMATE DEHYDROGENASE, CHLOROPLASTIC"/>
    <property type="match status" value="1"/>
</dbReference>
<dbReference type="PANTHER" id="PTHR21089">
    <property type="entry name" value="SHIKIMATE DEHYDROGENASE"/>
    <property type="match status" value="1"/>
</dbReference>
<dbReference type="Pfam" id="PF18317">
    <property type="entry name" value="SDH_C"/>
    <property type="match status" value="1"/>
</dbReference>
<dbReference type="Pfam" id="PF01488">
    <property type="entry name" value="Shikimate_DH"/>
    <property type="match status" value="1"/>
</dbReference>
<dbReference type="Pfam" id="PF08501">
    <property type="entry name" value="Shikimate_dh_N"/>
    <property type="match status" value="1"/>
</dbReference>
<dbReference type="SUPFAM" id="SSF53223">
    <property type="entry name" value="Aminoacid dehydrogenase-like, N-terminal domain"/>
    <property type="match status" value="1"/>
</dbReference>
<dbReference type="SUPFAM" id="SSF51735">
    <property type="entry name" value="NAD(P)-binding Rossmann-fold domains"/>
    <property type="match status" value="1"/>
</dbReference>
<reference key="1">
    <citation type="journal article" date="2005" name="J. Bacteriol.">
        <title>Insights on evolution of virulence and resistance from the complete genome analysis of an early methicillin-resistant Staphylococcus aureus strain and a biofilm-producing methicillin-resistant Staphylococcus epidermidis strain.</title>
        <authorList>
            <person name="Gill S.R."/>
            <person name="Fouts D.E."/>
            <person name="Archer G.L."/>
            <person name="Mongodin E.F."/>
            <person name="DeBoy R.T."/>
            <person name="Ravel J."/>
            <person name="Paulsen I.T."/>
            <person name="Kolonay J.F."/>
            <person name="Brinkac L.M."/>
            <person name="Beanan M.J."/>
            <person name="Dodson R.J."/>
            <person name="Daugherty S.C."/>
            <person name="Madupu R."/>
            <person name="Angiuoli S.V."/>
            <person name="Durkin A.S."/>
            <person name="Haft D.H."/>
            <person name="Vamathevan J.J."/>
            <person name="Khouri H."/>
            <person name="Utterback T.R."/>
            <person name="Lee C."/>
            <person name="Dimitrov G."/>
            <person name="Jiang L."/>
            <person name="Qin H."/>
            <person name="Weidman J."/>
            <person name="Tran K."/>
            <person name="Kang K.H."/>
            <person name="Hance I.R."/>
            <person name="Nelson K.E."/>
            <person name="Fraser C.M."/>
        </authorList>
    </citation>
    <scope>NUCLEOTIDE SEQUENCE [LARGE SCALE GENOMIC DNA]</scope>
    <source>
        <strain>ATCC 35984 / DSM 28319 / BCRC 17069 / CCUG 31568 / BM 3577 / RP62A</strain>
    </source>
</reference>
<reference key="2">
    <citation type="journal article" date="2009" name="FEBS J.">
        <title>X-ray crystallographic and enzymatic analyses of shikimate dehydrogenase from Staphylococcus epidermidis.</title>
        <authorList>
            <person name="Han C."/>
            <person name="Hu T."/>
            <person name="Wu D."/>
            <person name="Qu S."/>
            <person name="Zhou J."/>
            <person name="Ding J."/>
            <person name="Shen X."/>
            <person name="Qu D."/>
            <person name="Jiang H."/>
        </authorList>
    </citation>
    <scope>X-RAY CRYSTALLOGRAPHY (2.10 ANGSTROMS) IN COMPLEX WITH SHIKIMATE</scope>
    <scope>FUNCTION</scope>
    <scope>CATALYTIC ACTIVITY</scope>
    <scope>BIOPHYSICOCHEMICAL PROPERTIES</scope>
    <scope>MUTAGENESIS OF TYR-211</scope>
    <scope>SUBUNIT</scope>
    <source>
        <strain>ATCC 35984 / DSM 28319 / BCRC 17069 / CCUG 31568 / BM 3577 / RP62A</strain>
    </source>
</reference>
<gene>
    <name evidence="1 3" type="primary">aroE</name>
    <name type="ordered locus">SERP1163</name>
</gene>